<gene>
    <name evidence="6" type="primary">tadh</name>
</gene>
<evidence type="ECO:0000255" key="1"/>
<evidence type="ECO:0000269" key="2">
    <source>
    </source>
</evidence>
<evidence type="ECO:0000269" key="3">
    <source>
    </source>
</evidence>
<evidence type="ECO:0000303" key="4">
    <source>
    </source>
</evidence>
<evidence type="ECO:0000305" key="5"/>
<evidence type="ECO:0000312" key="6">
    <source>
        <dbReference type="EMBL" id="BAB86769.1"/>
    </source>
</evidence>
<protein>
    <recommendedName>
        <fullName evidence="4">Tauropine dehydrogenase</fullName>
        <shortName evidence="4">TaDH</shortName>
        <ecNumber evidence="3">1.5.1.23</ecNumber>
    </recommendedName>
    <alternativeName>
        <fullName evidence="4">NAD: tauropine oxidoreductase</fullName>
    </alternativeName>
</protein>
<proteinExistence type="evidence at protein level"/>
<keyword id="KW-0903">Direct protein sequencing</keyword>
<keyword id="KW-0520">NAD</keyword>
<keyword id="KW-0560">Oxidoreductase</keyword>
<accession>Q8T882</accession>
<reference evidence="6" key="1">
    <citation type="journal article" date="2004" name="Mar. Biotechnol.">
        <title>Complementary DNA cloning and molecular evolution of opine dehydrogenases in some marine invertebrates.</title>
        <authorList>
            <person name="Kimura T."/>
            <person name="Nakano T."/>
            <person name="Yamaguchi T."/>
            <person name="Sato M."/>
            <person name="Ogawa T."/>
            <person name="Muramoto K."/>
            <person name="Yokoyama T."/>
            <person name="Kan-No N."/>
            <person name="Nagahisa E."/>
            <person name="Janssen F."/>
            <person name="Grieshaber M.K."/>
        </authorList>
    </citation>
    <scope>NUCLEOTIDE SEQUENCE [MRNA]</scope>
    <source>
        <tissue evidence="2">Body wall</tissue>
    </source>
</reference>
<reference evidence="5" key="2">
    <citation type="journal article" date="1996" name="Comp. Biochem. Physiol.">
        <title>Tauropine dehydrogenase from the sandworm Arabella iricolor (Polychaeta: Errantia): purification and characterization.</title>
        <authorList>
            <person name="Kanno N."/>
            <person name="Sato M."/>
            <person name="Nagahisa E."/>
            <person name="Sato Y."/>
        </authorList>
    </citation>
    <scope>PROTEIN SEQUENCE OF 2-35</scope>
    <scope>FUNCTION</scope>
    <scope>CATALYTIC ACTIVITY</scope>
    <scope>ACTIVITY REGULATION</scope>
    <scope>BIOPHYSICOCHEMICAL PROPERTIES</scope>
</reference>
<organism>
    <name type="scientific">Arabella iricolor</name>
    <name type="common">Opal worm</name>
    <dbReference type="NCBI Taxonomy" id="65494"/>
    <lineage>
        <taxon>Eukaryota</taxon>
        <taxon>Metazoa</taxon>
        <taxon>Spiralia</taxon>
        <taxon>Lophotrochozoa</taxon>
        <taxon>Annelida</taxon>
        <taxon>Polychaeta</taxon>
        <taxon>Errantia</taxon>
        <taxon>Eunicida</taxon>
        <taxon>Oenonidae</taxon>
        <taxon>Arabella</taxon>
    </lineage>
</organism>
<feature type="initiator methionine" description="Removed" evidence="3">
    <location>
        <position position="1"/>
    </location>
</feature>
<feature type="chain" id="PRO_0000413626" description="Tauropine dehydrogenase">
    <location>
        <begin position="2"/>
        <end position="397"/>
    </location>
</feature>
<name>TADH_ARAIR</name>
<dbReference type="EC" id="1.5.1.23" evidence="3"/>
<dbReference type="EMBL" id="AB081841">
    <property type="protein sequence ID" value="BAB86769.1"/>
    <property type="molecule type" value="mRNA"/>
</dbReference>
<dbReference type="PIR" id="A59226">
    <property type="entry name" value="A59226"/>
</dbReference>
<dbReference type="SMR" id="Q8T882"/>
<dbReference type="KEGG" id="ag:BAB86769"/>
<dbReference type="BioCyc" id="MetaCyc:MONOMER-18217"/>
<dbReference type="BRENDA" id="1.5.1.23">
    <property type="organism ID" value="400"/>
</dbReference>
<dbReference type="GO" id="GO:0050325">
    <property type="term" value="F:tauropine dehydrogenase activity"/>
    <property type="evidence" value="ECO:0007669"/>
    <property type="project" value="UniProtKB-EC"/>
</dbReference>
<dbReference type="Gene3D" id="1.10.1040.10">
    <property type="entry name" value="N-(1-d-carboxylethyl)-l-norvaline Dehydrogenase, domain 2"/>
    <property type="match status" value="1"/>
</dbReference>
<dbReference type="Gene3D" id="3.40.50.720">
    <property type="entry name" value="NAD(P)-binding Rossmann-like Domain"/>
    <property type="match status" value="1"/>
</dbReference>
<dbReference type="InterPro" id="IPR008927">
    <property type="entry name" value="6-PGluconate_DH-like_C_sf"/>
</dbReference>
<dbReference type="InterPro" id="IPR013328">
    <property type="entry name" value="6PGD_dom2"/>
</dbReference>
<dbReference type="InterPro" id="IPR036291">
    <property type="entry name" value="NAD(P)-bd_dom_sf"/>
</dbReference>
<dbReference type="InterPro" id="IPR051729">
    <property type="entry name" value="Opine/Lysopine_DH"/>
</dbReference>
<dbReference type="InterPro" id="IPR003421">
    <property type="entry name" value="Opine_DH"/>
</dbReference>
<dbReference type="PANTHER" id="PTHR38015">
    <property type="entry name" value="BLR6086 PROTEIN"/>
    <property type="match status" value="1"/>
</dbReference>
<dbReference type="PANTHER" id="PTHR38015:SF1">
    <property type="entry name" value="OPINE DEHYDROGENASE DOMAIN-CONTAINING PROTEIN"/>
    <property type="match status" value="1"/>
</dbReference>
<dbReference type="Pfam" id="PF02317">
    <property type="entry name" value="Octopine_DH"/>
    <property type="match status" value="1"/>
</dbReference>
<dbReference type="SUPFAM" id="SSF48179">
    <property type="entry name" value="6-phosphogluconate dehydrogenase C-terminal domain-like"/>
    <property type="match status" value="1"/>
</dbReference>
<dbReference type="SUPFAM" id="SSF51735">
    <property type="entry name" value="NAD(P)-binding Rossmann-fold domains"/>
    <property type="match status" value="1"/>
</dbReference>
<comment type="function">
    <text evidence="3">May play a role in maintaining a redox balance during environmental and functional hypoxia. Exhibits high specificity for taurine and in addition, requires both alpha amino group and C-2 carbon chain length as a critical factor for active site binding of the amino acid. A methyl group in the beta position may be critical for active site binding of the keto acid. In the reverse reaction requires NAD(H) for the activity but not NADP(H).</text>
</comment>
<comment type="catalytic activity">
    <reaction evidence="3">
        <text>tauropine + NAD(+) + H2O = taurine + pyruvate + NADH + H(+)</text>
        <dbReference type="Rhea" id="RHEA:12580"/>
        <dbReference type="ChEBI" id="CHEBI:15361"/>
        <dbReference type="ChEBI" id="CHEBI:15377"/>
        <dbReference type="ChEBI" id="CHEBI:15378"/>
        <dbReference type="ChEBI" id="CHEBI:57540"/>
        <dbReference type="ChEBI" id="CHEBI:57779"/>
        <dbReference type="ChEBI" id="CHEBI:57945"/>
        <dbReference type="ChEBI" id="CHEBI:507393"/>
        <dbReference type="EC" id="1.5.1.23"/>
    </reaction>
</comment>
<comment type="activity regulation">
    <text evidence="3">Subject to substrate inhibition by pyruvate for the reverse reaction but not for the forward reaction of the tauropine dehydrogenase activity.</text>
</comment>
<comment type="biophysicochemical properties">
    <kinetics>
        <KM evidence="3">35.7 mM for taurine for the reverse reaction of the tauropine dehydrogenase activity (at pH 7.0)</KM>
        <KM evidence="3">0.34 mM for pyruvate for the reverse reaction of the tauropine dehydrogenase activity (at pH 7.0)</KM>
        <KM evidence="3">0.036 mM for NADH for the reverse reaction of the tauropine dehydrogenase activity (at pH 7.0)</KM>
        <KM evidence="3">4.9 mM for oxaloacetate for the reverse reaction of the tauropine dehydrogenase activity (at pH 7.0)</KM>
        <KM evidence="3">3.3 mM for 2-ketobutyrate for the reverse reaction of the tauropine dehydrogenase activity (at pH 7.0)</KM>
        <KM evidence="3">4.8 mM for tauropine for the forward reaction of the tauropine dehydrogenase activity (at pH 8.5)</KM>
        <KM evidence="3">0.051 mM for NAD(+) for the forward reaction of the tauropine dehydrogenase activity (at pH 8.5)</KM>
    </kinetics>
    <phDependence>
        <text evidence="3">Optimum pH is 8.5 for the forward reaction, and 6.6-7.3 for the reverse reaction. The half-maximal rate is observed at 6.8 for the forward reaction, and at 5.5-7.9 for the reverse reaction.</text>
    </phDependence>
</comment>
<comment type="similarity">
    <text evidence="1">Belongs to the lysopine/nopaline/octopine/opine/vitopine dehydrogenases family.</text>
</comment>
<sequence length="397" mass="43229">MVVLTICGGGNAAHTLAGIASNQPNMEVRVLTLYADEAERWIKSMETNDFTTIKYATGKDPVHLKTKPKLVTKNPEQGATGADIIVITVPAFAHAQYLTALKPHVKPGTVVVGFPGQPGFDFEIMKIWGDLAKQCTVMNFVSLPWACRIKEFGKSVEVLATKDMMFGSVRNGTVAPKMDPTAMIQGCLGPLPRLECSGHLLGMSIMAVNGMLHPSIMYNRWHDWDGKPVDAPPLFYHGLSQAGADLLSDVSNETIAIAKKVMEQRQGVDLSNVIHMHPYYIGAYPDDISDKSSLYTCINTNAGFKGLTHPCTKTADGKFVPDFTGRYFGEDIPFGLAVTRGIAEIAGCPTPNIDKIIEWAQKLMGKEYLVGGKFTGKDISATRAPQRYGFNTLDSIL</sequence>